<feature type="chain" id="PRO_0000231573" description="Deoxyribose-phosphate aldolase">
    <location>
        <begin position="1"/>
        <end position="216"/>
    </location>
</feature>
<feature type="active site" description="Proton donor/acceptor" evidence="1">
    <location>
        <position position="89"/>
    </location>
</feature>
<feature type="active site" description="Schiff-base intermediate with acetaldehyde" evidence="1">
    <location>
        <position position="153"/>
    </location>
</feature>
<feature type="active site" description="Proton donor/acceptor" evidence="1">
    <location>
        <position position="182"/>
    </location>
</feature>
<accession>Q73QJ5</accession>
<comment type="function">
    <text evidence="1">Catalyzes a reversible aldol reaction between acetaldehyde and D-glyceraldehyde 3-phosphate to generate 2-deoxy-D-ribose 5-phosphate.</text>
</comment>
<comment type="catalytic activity">
    <reaction evidence="1">
        <text>2-deoxy-D-ribose 5-phosphate = D-glyceraldehyde 3-phosphate + acetaldehyde</text>
        <dbReference type="Rhea" id="RHEA:12821"/>
        <dbReference type="ChEBI" id="CHEBI:15343"/>
        <dbReference type="ChEBI" id="CHEBI:59776"/>
        <dbReference type="ChEBI" id="CHEBI:62877"/>
        <dbReference type="EC" id="4.1.2.4"/>
    </reaction>
</comment>
<comment type="pathway">
    <text evidence="1">Carbohydrate degradation; 2-deoxy-D-ribose 1-phosphate degradation; D-glyceraldehyde 3-phosphate and acetaldehyde from 2-deoxy-alpha-D-ribose 1-phosphate: step 2/2.</text>
</comment>
<comment type="subcellular location">
    <subcellularLocation>
        <location evidence="1">Cytoplasm</location>
    </subcellularLocation>
</comment>
<comment type="similarity">
    <text evidence="1">Belongs to the DeoC/FbaB aldolase family. DeoC type 1 subfamily.</text>
</comment>
<gene>
    <name evidence="1" type="primary">deoC</name>
    <name type="ordered locus">TDE_0448</name>
</gene>
<dbReference type="EC" id="4.1.2.4" evidence="1"/>
<dbReference type="EMBL" id="AE017226">
    <property type="protein sequence ID" value="AAS10943.1"/>
    <property type="molecule type" value="Genomic_DNA"/>
</dbReference>
<dbReference type="RefSeq" id="NP_971062.1">
    <property type="nucleotide sequence ID" value="NC_002967.9"/>
</dbReference>
<dbReference type="RefSeq" id="WP_002672661.1">
    <property type="nucleotide sequence ID" value="NC_002967.9"/>
</dbReference>
<dbReference type="SMR" id="Q73QJ5"/>
<dbReference type="STRING" id="243275.TDE_0448"/>
<dbReference type="PaxDb" id="243275-TDE_0448"/>
<dbReference type="GeneID" id="2740430"/>
<dbReference type="KEGG" id="tde:TDE_0448"/>
<dbReference type="PATRIC" id="fig|243275.7.peg.435"/>
<dbReference type="eggNOG" id="COG0274">
    <property type="taxonomic scope" value="Bacteria"/>
</dbReference>
<dbReference type="HOGENOM" id="CLU_053595_0_1_12"/>
<dbReference type="OrthoDB" id="9778711at2"/>
<dbReference type="UniPathway" id="UPA00002">
    <property type="reaction ID" value="UER00468"/>
</dbReference>
<dbReference type="Proteomes" id="UP000008212">
    <property type="component" value="Chromosome"/>
</dbReference>
<dbReference type="GO" id="GO:0005737">
    <property type="term" value="C:cytoplasm"/>
    <property type="evidence" value="ECO:0007669"/>
    <property type="project" value="UniProtKB-SubCell"/>
</dbReference>
<dbReference type="GO" id="GO:0004139">
    <property type="term" value="F:deoxyribose-phosphate aldolase activity"/>
    <property type="evidence" value="ECO:0007669"/>
    <property type="project" value="UniProtKB-UniRule"/>
</dbReference>
<dbReference type="GO" id="GO:0006018">
    <property type="term" value="P:2-deoxyribose 1-phosphate catabolic process"/>
    <property type="evidence" value="ECO:0007669"/>
    <property type="project" value="UniProtKB-UniRule"/>
</dbReference>
<dbReference type="GO" id="GO:0016052">
    <property type="term" value="P:carbohydrate catabolic process"/>
    <property type="evidence" value="ECO:0007669"/>
    <property type="project" value="TreeGrafter"/>
</dbReference>
<dbReference type="GO" id="GO:0009264">
    <property type="term" value="P:deoxyribonucleotide catabolic process"/>
    <property type="evidence" value="ECO:0007669"/>
    <property type="project" value="InterPro"/>
</dbReference>
<dbReference type="CDD" id="cd00959">
    <property type="entry name" value="DeoC"/>
    <property type="match status" value="1"/>
</dbReference>
<dbReference type="FunFam" id="3.20.20.70:FF:000044">
    <property type="entry name" value="Deoxyribose-phosphate aldolase"/>
    <property type="match status" value="1"/>
</dbReference>
<dbReference type="Gene3D" id="3.20.20.70">
    <property type="entry name" value="Aldolase class I"/>
    <property type="match status" value="1"/>
</dbReference>
<dbReference type="HAMAP" id="MF_00114">
    <property type="entry name" value="DeoC_type1"/>
    <property type="match status" value="1"/>
</dbReference>
<dbReference type="InterPro" id="IPR013785">
    <property type="entry name" value="Aldolase_TIM"/>
</dbReference>
<dbReference type="InterPro" id="IPR011343">
    <property type="entry name" value="DeoC"/>
</dbReference>
<dbReference type="InterPro" id="IPR002915">
    <property type="entry name" value="DeoC/FbaB/LacD_aldolase"/>
</dbReference>
<dbReference type="InterPro" id="IPR028581">
    <property type="entry name" value="DeoC_typeI"/>
</dbReference>
<dbReference type="NCBIfam" id="TIGR00126">
    <property type="entry name" value="deoC"/>
    <property type="match status" value="1"/>
</dbReference>
<dbReference type="PANTHER" id="PTHR10889">
    <property type="entry name" value="DEOXYRIBOSE-PHOSPHATE ALDOLASE"/>
    <property type="match status" value="1"/>
</dbReference>
<dbReference type="PANTHER" id="PTHR10889:SF1">
    <property type="entry name" value="DEOXYRIBOSE-PHOSPHATE ALDOLASE"/>
    <property type="match status" value="1"/>
</dbReference>
<dbReference type="Pfam" id="PF01791">
    <property type="entry name" value="DeoC"/>
    <property type="match status" value="1"/>
</dbReference>
<dbReference type="PIRSF" id="PIRSF001357">
    <property type="entry name" value="DeoC"/>
    <property type="match status" value="1"/>
</dbReference>
<dbReference type="SMART" id="SM01133">
    <property type="entry name" value="DeoC"/>
    <property type="match status" value="1"/>
</dbReference>
<dbReference type="SUPFAM" id="SSF51569">
    <property type="entry name" value="Aldolase"/>
    <property type="match status" value="1"/>
</dbReference>
<keyword id="KW-0963">Cytoplasm</keyword>
<keyword id="KW-0456">Lyase</keyword>
<keyword id="KW-1185">Reference proteome</keyword>
<keyword id="KW-0704">Schiff base</keyword>
<organism>
    <name type="scientific">Treponema denticola (strain ATCC 35405 / DSM 14222 / CIP 103919 / JCM 8153 / KCTC 15104)</name>
    <dbReference type="NCBI Taxonomy" id="243275"/>
    <lineage>
        <taxon>Bacteria</taxon>
        <taxon>Pseudomonadati</taxon>
        <taxon>Spirochaetota</taxon>
        <taxon>Spirochaetia</taxon>
        <taxon>Spirochaetales</taxon>
        <taxon>Treponemataceae</taxon>
        <taxon>Treponema</taxon>
    </lineage>
</organism>
<reference key="1">
    <citation type="journal article" date="2004" name="Proc. Natl. Acad. Sci. U.S.A.">
        <title>Comparison of the genome of the oral pathogen Treponema denticola with other spirochete genomes.</title>
        <authorList>
            <person name="Seshadri R."/>
            <person name="Myers G.S.A."/>
            <person name="Tettelin H."/>
            <person name="Eisen J.A."/>
            <person name="Heidelberg J.F."/>
            <person name="Dodson R.J."/>
            <person name="Davidsen T.M."/>
            <person name="DeBoy R.T."/>
            <person name="Fouts D.E."/>
            <person name="Haft D.H."/>
            <person name="Selengut J."/>
            <person name="Ren Q."/>
            <person name="Brinkac L.M."/>
            <person name="Madupu R."/>
            <person name="Kolonay J.F."/>
            <person name="Durkin S.A."/>
            <person name="Daugherty S.C."/>
            <person name="Shetty J."/>
            <person name="Shvartsbeyn A."/>
            <person name="Gebregeorgis E."/>
            <person name="Geer K."/>
            <person name="Tsegaye G."/>
            <person name="Malek J.A."/>
            <person name="Ayodeji B."/>
            <person name="Shatsman S."/>
            <person name="McLeod M.P."/>
            <person name="Smajs D."/>
            <person name="Howell J.K."/>
            <person name="Pal S."/>
            <person name="Amin A."/>
            <person name="Vashisth P."/>
            <person name="McNeill T.Z."/>
            <person name="Xiang Q."/>
            <person name="Sodergren E."/>
            <person name="Baca E."/>
            <person name="Weinstock G.M."/>
            <person name="Norris S.J."/>
            <person name="Fraser C.M."/>
            <person name="Paulsen I.T."/>
        </authorList>
    </citation>
    <scope>NUCLEOTIDE SEQUENCE [LARGE SCALE GENOMIC DNA]</scope>
    <source>
        <strain>ATCC 35405 / DSM 14222 / CIP 103919 / JCM 8153 / KCTC 15104</strain>
    </source>
</reference>
<name>DEOC_TREDE</name>
<proteinExistence type="inferred from homology"/>
<evidence type="ECO:0000255" key="1">
    <source>
        <dbReference type="HAMAP-Rule" id="MF_00114"/>
    </source>
</evidence>
<sequence length="216" mass="23447">MELNKYIDHTLLKPTASEKDIIKICNEAKEYHFASVCVNPCNVSLVRKELKGSDVKVCSVISFPFGASSTEVKVEEAKKAIEAGAEEIDMVINVGKLLEGDLEYTQNEVSAITKACHEKNVLLKVIVETCYLEEKNIADICAIIEKAGADFIKTSTGYGSRGASVEDIKLFKKYLKKDTKIKASGGVRTREDAETYIGLGCSRIGASSGIAIVTGK</sequence>
<protein>
    <recommendedName>
        <fullName evidence="1">Deoxyribose-phosphate aldolase</fullName>
        <shortName evidence="1">DERA</shortName>
        <ecNumber evidence="1">4.1.2.4</ecNumber>
    </recommendedName>
    <alternativeName>
        <fullName evidence="1">2-deoxy-D-ribose 5-phosphate aldolase</fullName>
    </alternativeName>
    <alternativeName>
        <fullName evidence="1">Phosphodeoxyriboaldolase</fullName>
        <shortName evidence="1">Deoxyriboaldolase</shortName>
    </alternativeName>
</protein>